<organism>
    <name type="scientific">Oryza sativa subsp. japonica</name>
    <name type="common">Rice</name>
    <dbReference type="NCBI Taxonomy" id="39947"/>
    <lineage>
        <taxon>Eukaryota</taxon>
        <taxon>Viridiplantae</taxon>
        <taxon>Streptophyta</taxon>
        <taxon>Embryophyta</taxon>
        <taxon>Tracheophyta</taxon>
        <taxon>Spermatophyta</taxon>
        <taxon>Magnoliopsida</taxon>
        <taxon>Liliopsida</taxon>
        <taxon>Poales</taxon>
        <taxon>Poaceae</taxon>
        <taxon>BOP clade</taxon>
        <taxon>Oryzoideae</taxon>
        <taxon>Oryzeae</taxon>
        <taxon>Oryzinae</taxon>
        <taxon>Oryza</taxon>
        <taxon>Oryza sativa</taxon>
    </lineage>
</organism>
<evidence type="ECO:0000250" key="1"/>
<evidence type="ECO:0000255" key="2"/>
<evidence type="ECO:0000305" key="3"/>
<evidence type="ECO:0000312" key="4">
    <source>
        <dbReference type="EMBL" id="EAZ40581.1"/>
    </source>
</evidence>
<proteinExistence type="inferred from homology"/>
<gene>
    <name type="primary">BC1L7</name>
    <name type="ordered locus">Os07g0604400</name>
    <name type="ordered locus">LOC_Os07g41320</name>
    <name evidence="4" type="ORF">OsJ_25038</name>
    <name type="ORF">OSJNBb0040H10.13</name>
</gene>
<comment type="function">
    <text evidence="1">Involved in determining the orientation of cell expansion, probably by playing an important role in cellulose deposition. May act by recruiting cellulose synthesizing complexes to discrete positions on the cell surface (By similarity).</text>
</comment>
<comment type="subcellular location">
    <subcellularLocation>
        <location evidence="3">Cell membrane</location>
        <topology evidence="3">Lipid-anchor</topology>
        <topology evidence="3">GPI-anchor</topology>
    </subcellularLocation>
</comment>
<comment type="similarity">
    <text evidence="3">Belongs to the COBRA family.</text>
</comment>
<dbReference type="EMBL" id="AP005175">
    <property type="protein sequence ID" value="BAC83873.1"/>
    <property type="molecule type" value="Genomic_DNA"/>
</dbReference>
<dbReference type="EMBL" id="AP014963">
    <property type="protein sequence ID" value="BAT02550.1"/>
    <property type="molecule type" value="Genomic_DNA"/>
</dbReference>
<dbReference type="EMBL" id="CM000144">
    <property type="protein sequence ID" value="EAZ40581.1"/>
    <property type="molecule type" value="Genomic_DNA"/>
</dbReference>
<dbReference type="RefSeq" id="XP_015646929.1">
    <property type="nucleotide sequence ID" value="XM_015791443.1"/>
</dbReference>
<dbReference type="FunCoup" id="Q6Z4G7">
    <property type="interactions" value="19"/>
</dbReference>
<dbReference type="GlyCosmos" id="Q6Z4G7">
    <property type="glycosylation" value="8 sites, No reported glycans"/>
</dbReference>
<dbReference type="PaxDb" id="39947-Q6Z4G7"/>
<dbReference type="EnsemblPlants" id="Os07t0604400-00">
    <property type="protein sequence ID" value="Os07t0604400-00"/>
    <property type="gene ID" value="Os07g0604400"/>
</dbReference>
<dbReference type="Gramene" id="Os07t0604400-00">
    <property type="protein sequence ID" value="Os07t0604400-00"/>
    <property type="gene ID" value="Os07g0604400"/>
</dbReference>
<dbReference type="eggNOG" id="ENOG502QQYT">
    <property type="taxonomic scope" value="Eukaryota"/>
</dbReference>
<dbReference type="HOGENOM" id="CLU_038120_0_0_1"/>
<dbReference type="InParanoid" id="Q6Z4G7"/>
<dbReference type="OMA" id="CDAHKPC"/>
<dbReference type="OrthoDB" id="2012261at2759"/>
<dbReference type="Proteomes" id="UP000000763">
    <property type="component" value="Chromosome 7"/>
</dbReference>
<dbReference type="Proteomes" id="UP000007752">
    <property type="component" value="Chromosome 7"/>
</dbReference>
<dbReference type="Proteomes" id="UP000059680">
    <property type="component" value="Chromosome 7"/>
</dbReference>
<dbReference type="GO" id="GO:0005886">
    <property type="term" value="C:plasma membrane"/>
    <property type="evidence" value="ECO:0000318"/>
    <property type="project" value="GO_Central"/>
</dbReference>
<dbReference type="GO" id="GO:0098552">
    <property type="term" value="C:side of membrane"/>
    <property type="evidence" value="ECO:0007669"/>
    <property type="project" value="UniProtKB-KW"/>
</dbReference>
<dbReference type="GO" id="GO:0010215">
    <property type="term" value="P:cellulose microfibril organization"/>
    <property type="evidence" value="ECO:0007669"/>
    <property type="project" value="InterPro"/>
</dbReference>
<dbReference type="GO" id="GO:0052324">
    <property type="term" value="P:plant-type cell wall cellulose biosynthetic process"/>
    <property type="evidence" value="ECO:0000318"/>
    <property type="project" value="GO_Central"/>
</dbReference>
<dbReference type="InterPro" id="IPR056900">
    <property type="entry name" value="COB_C"/>
</dbReference>
<dbReference type="InterPro" id="IPR006918">
    <property type="entry name" value="COBRA_pln"/>
</dbReference>
<dbReference type="PANTHER" id="PTHR31673:SF23">
    <property type="entry name" value="COBRA-LIKE PROTEIN 4"/>
    <property type="match status" value="1"/>
</dbReference>
<dbReference type="PANTHER" id="PTHR31673">
    <property type="entry name" value="PROTEIN COBRA"/>
    <property type="match status" value="1"/>
</dbReference>
<dbReference type="Pfam" id="PF25079">
    <property type="entry name" value="COB_C"/>
    <property type="match status" value="1"/>
</dbReference>
<dbReference type="Pfam" id="PF04833">
    <property type="entry name" value="COBRA"/>
    <property type="match status" value="1"/>
</dbReference>
<dbReference type="PIRSF" id="PIRSF038122">
    <property type="entry name" value="COBRA"/>
    <property type="match status" value="1"/>
</dbReference>
<feature type="signal peptide" evidence="2">
    <location>
        <begin position="1"/>
        <end position="21"/>
    </location>
</feature>
<feature type="chain" id="PRO_0000247637" description="COBRA-like protein 6">
    <location>
        <begin position="22"/>
        <end position="426"/>
    </location>
</feature>
<feature type="propeptide" id="PRO_0000247638" description="Removed in mature form" evidence="2">
    <location>
        <begin position="427"/>
        <end position="451"/>
    </location>
</feature>
<feature type="lipid moiety-binding region" description="GPI-anchor amidated asparagine" evidence="2">
    <location>
        <position position="426"/>
    </location>
</feature>
<feature type="glycosylation site" description="N-linked (GlcNAc...) asparagine" evidence="2">
    <location>
        <position position="30"/>
    </location>
</feature>
<feature type="glycosylation site" description="N-linked (GlcNAc...) asparagine" evidence="2">
    <location>
        <position position="155"/>
    </location>
</feature>
<feature type="glycosylation site" description="N-linked (GlcNAc...) asparagine" evidence="2">
    <location>
        <position position="163"/>
    </location>
</feature>
<feature type="glycosylation site" description="N-linked (GlcNAc...) asparagine" evidence="2">
    <location>
        <position position="202"/>
    </location>
</feature>
<feature type="glycosylation site" description="N-linked (GlcNAc...) asparagine" evidence="2">
    <location>
        <position position="227"/>
    </location>
</feature>
<feature type="glycosylation site" description="N-linked (GlcNAc...) asparagine" evidence="2">
    <location>
        <position position="323"/>
    </location>
</feature>
<feature type="glycosylation site" description="N-linked (GlcNAc...) asparagine" evidence="2">
    <location>
        <position position="338"/>
    </location>
</feature>
<feature type="glycosylation site" description="N-linked (GlcNAc...) asparagine" evidence="2">
    <location>
        <position position="357"/>
    </location>
</feature>
<accession>Q6Z4G7</accession>
<accession>A3BLZ2</accession>
<sequence length="451" mass="49623">MAVLGSLLLLILAATLSVAVAYDPLDPNGNITIKWDVMSWTPDGYVAMVTINNYQTYRQIMAPGWTVGWTWARQEVIWSMVGAQATDQGDCSRFKANLPHCCRRTPAVVDLLPGVPYNQQIANCCRGGVLPAYGQAPSAAAAAFQVSVGQAGTTNRTVRLPRNFTLLGPGPGYTCGRARVVPSTVFLTADRRRKTQALMTWNVTCTYSQHLASKYPSCCVSFSSFYNDTIVPCAKCACGCDAHKPCVRSERDGKRLAVTGKKHDANANAHGRGNGVAAAAMAAPLLQCTTHMCPVRVHWHVKLNYREYWRAKITIVNFNYRMNYTGWTLVAQHPNLDNITEVFSFDYKPVVSYGSINDTAMFYGLKYFNDQLMEAGPHGNVQSEVLMRKDARTFTFRQGWAFPRKVYFNGDECQMPPPDSYPYLPNAAPPAAASLVGSAVAMAALVFFLMA</sequence>
<protein>
    <recommendedName>
        <fullName>COBRA-like protein 6</fullName>
    </recommendedName>
    <alternativeName>
        <fullName>Protein BRITTLE CULM1-like 7</fullName>
    </alternativeName>
</protein>
<reference key="1">
    <citation type="journal article" date="2005" name="Nature">
        <title>The map-based sequence of the rice genome.</title>
        <authorList>
            <consortium name="International rice genome sequencing project (IRGSP)"/>
        </authorList>
    </citation>
    <scope>NUCLEOTIDE SEQUENCE [LARGE SCALE GENOMIC DNA]</scope>
    <source>
        <strain>cv. Nipponbare</strain>
    </source>
</reference>
<reference key="2">
    <citation type="journal article" date="2013" name="Rice">
        <title>Improvement of the Oryza sativa Nipponbare reference genome using next generation sequence and optical map data.</title>
        <authorList>
            <person name="Kawahara Y."/>
            <person name="de la Bastide M."/>
            <person name="Hamilton J.P."/>
            <person name="Kanamori H."/>
            <person name="McCombie W.R."/>
            <person name="Ouyang S."/>
            <person name="Schwartz D.C."/>
            <person name="Tanaka T."/>
            <person name="Wu J."/>
            <person name="Zhou S."/>
            <person name="Childs K.L."/>
            <person name="Davidson R.M."/>
            <person name="Lin H."/>
            <person name="Quesada-Ocampo L."/>
            <person name="Vaillancourt B."/>
            <person name="Sakai H."/>
            <person name="Lee S.S."/>
            <person name="Kim J."/>
            <person name="Numa H."/>
            <person name="Itoh T."/>
            <person name="Buell C.R."/>
            <person name="Matsumoto T."/>
        </authorList>
    </citation>
    <scope>GENOME REANNOTATION</scope>
    <source>
        <strain>cv. Nipponbare</strain>
    </source>
</reference>
<reference key="3">
    <citation type="journal article" date="2005" name="PLoS Biol.">
        <title>The genomes of Oryza sativa: a history of duplications.</title>
        <authorList>
            <person name="Yu J."/>
            <person name="Wang J."/>
            <person name="Lin W."/>
            <person name="Li S."/>
            <person name="Li H."/>
            <person name="Zhou J."/>
            <person name="Ni P."/>
            <person name="Dong W."/>
            <person name="Hu S."/>
            <person name="Zeng C."/>
            <person name="Zhang J."/>
            <person name="Zhang Y."/>
            <person name="Li R."/>
            <person name="Xu Z."/>
            <person name="Li S."/>
            <person name="Li X."/>
            <person name="Zheng H."/>
            <person name="Cong L."/>
            <person name="Lin L."/>
            <person name="Yin J."/>
            <person name="Geng J."/>
            <person name="Li G."/>
            <person name="Shi J."/>
            <person name="Liu J."/>
            <person name="Lv H."/>
            <person name="Li J."/>
            <person name="Wang J."/>
            <person name="Deng Y."/>
            <person name="Ran L."/>
            <person name="Shi X."/>
            <person name="Wang X."/>
            <person name="Wu Q."/>
            <person name="Li C."/>
            <person name="Ren X."/>
            <person name="Wang J."/>
            <person name="Wang X."/>
            <person name="Li D."/>
            <person name="Liu D."/>
            <person name="Zhang X."/>
            <person name="Ji Z."/>
            <person name="Zhao W."/>
            <person name="Sun Y."/>
            <person name="Zhang Z."/>
            <person name="Bao J."/>
            <person name="Han Y."/>
            <person name="Dong L."/>
            <person name="Ji J."/>
            <person name="Chen P."/>
            <person name="Wu S."/>
            <person name="Liu J."/>
            <person name="Xiao Y."/>
            <person name="Bu D."/>
            <person name="Tan J."/>
            <person name="Yang L."/>
            <person name="Ye C."/>
            <person name="Zhang J."/>
            <person name="Xu J."/>
            <person name="Zhou Y."/>
            <person name="Yu Y."/>
            <person name="Zhang B."/>
            <person name="Zhuang S."/>
            <person name="Wei H."/>
            <person name="Liu B."/>
            <person name="Lei M."/>
            <person name="Yu H."/>
            <person name="Li Y."/>
            <person name="Xu H."/>
            <person name="Wei S."/>
            <person name="He X."/>
            <person name="Fang L."/>
            <person name="Zhang Z."/>
            <person name="Zhang Y."/>
            <person name="Huang X."/>
            <person name="Su Z."/>
            <person name="Tong W."/>
            <person name="Li J."/>
            <person name="Tong Z."/>
            <person name="Li S."/>
            <person name="Ye J."/>
            <person name="Wang L."/>
            <person name="Fang L."/>
            <person name="Lei T."/>
            <person name="Chen C.-S."/>
            <person name="Chen H.-C."/>
            <person name="Xu Z."/>
            <person name="Li H."/>
            <person name="Huang H."/>
            <person name="Zhang F."/>
            <person name="Xu H."/>
            <person name="Li N."/>
            <person name="Zhao C."/>
            <person name="Li S."/>
            <person name="Dong L."/>
            <person name="Huang Y."/>
            <person name="Li L."/>
            <person name="Xi Y."/>
            <person name="Qi Q."/>
            <person name="Li W."/>
            <person name="Zhang B."/>
            <person name="Hu W."/>
            <person name="Zhang Y."/>
            <person name="Tian X."/>
            <person name="Jiao Y."/>
            <person name="Liang X."/>
            <person name="Jin J."/>
            <person name="Gao L."/>
            <person name="Zheng W."/>
            <person name="Hao B."/>
            <person name="Liu S.-M."/>
            <person name="Wang W."/>
            <person name="Yuan L."/>
            <person name="Cao M."/>
            <person name="McDermott J."/>
            <person name="Samudrala R."/>
            <person name="Wang J."/>
            <person name="Wong G.K.-S."/>
            <person name="Yang H."/>
        </authorList>
    </citation>
    <scope>NUCLEOTIDE SEQUENCE [LARGE SCALE GENOMIC DNA]</scope>
    <source>
        <strain>cv. Nipponbare</strain>
    </source>
</reference>
<reference key="4">
    <citation type="journal article" date="2003" name="Plant Cell">
        <title>BRITTLE CULM1, which encodes a COBRA-like protein, affects the mechanical properties of rice plants.</title>
        <authorList>
            <person name="Li Y."/>
            <person name="Qian Q."/>
            <person name="Zhou Y."/>
            <person name="Yan M."/>
            <person name="Sun L."/>
            <person name="Zhang M."/>
            <person name="Fu Z."/>
            <person name="Wang Y."/>
            <person name="Han B."/>
            <person name="Pang X."/>
            <person name="Chen M."/>
            <person name="Li J."/>
        </authorList>
    </citation>
    <scope>IDENTIFICATION</scope>
    <scope>NOMENCLATURE</scope>
</reference>
<name>COBL6_ORYSJ</name>
<keyword id="KW-1003">Cell membrane</keyword>
<keyword id="KW-0325">Glycoprotein</keyword>
<keyword id="KW-0336">GPI-anchor</keyword>
<keyword id="KW-0449">Lipoprotein</keyword>
<keyword id="KW-0472">Membrane</keyword>
<keyword id="KW-1185">Reference proteome</keyword>
<keyword id="KW-0732">Signal</keyword>